<proteinExistence type="inferred from homology"/>
<dbReference type="EMBL" id="U85262">
    <property type="protein sequence ID" value="AAB99526.1"/>
    <property type="status" value="ALT_INIT"/>
    <property type="molecule type" value="Genomic_DNA"/>
</dbReference>
<dbReference type="EMBL" id="AE006641">
    <property type="protein sequence ID" value="AAK40673.1"/>
    <property type="molecule type" value="Genomic_DNA"/>
</dbReference>
<dbReference type="PIR" id="B90177">
    <property type="entry name" value="B90177"/>
</dbReference>
<dbReference type="RefSeq" id="WP_009990632.1">
    <property type="nucleotide sequence ID" value="NC_002754.1"/>
</dbReference>
<dbReference type="SMR" id="P96039"/>
<dbReference type="FunCoup" id="P96039">
    <property type="interactions" value="218"/>
</dbReference>
<dbReference type="STRING" id="273057.SSO0344"/>
<dbReference type="PaxDb" id="273057-SSO0344"/>
<dbReference type="EnsemblBacteria" id="AAK40673">
    <property type="protein sequence ID" value="AAK40673"/>
    <property type="gene ID" value="SSO0344"/>
</dbReference>
<dbReference type="KEGG" id="sso:SSO0344"/>
<dbReference type="PATRIC" id="fig|273057.12.peg.334"/>
<dbReference type="eggNOG" id="arCOG04288">
    <property type="taxonomic scope" value="Archaea"/>
</dbReference>
<dbReference type="HOGENOM" id="CLU_053173_0_0_2"/>
<dbReference type="InParanoid" id="P96039"/>
<dbReference type="PhylomeDB" id="P96039"/>
<dbReference type="Proteomes" id="UP000001974">
    <property type="component" value="Chromosome"/>
</dbReference>
<dbReference type="GO" id="GO:0022625">
    <property type="term" value="C:cytosolic large ribosomal subunit"/>
    <property type="evidence" value="ECO:0000318"/>
    <property type="project" value="GO_Central"/>
</dbReference>
<dbReference type="GO" id="GO:0070180">
    <property type="term" value="F:large ribosomal subunit rRNA binding"/>
    <property type="evidence" value="ECO:0000318"/>
    <property type="project" value="GO_Central"/>
</dbReference>
<dbReference type="GO" id="GO:0003735">
    <property type="term" value="F:structural constituent of ribosome"/>
    <property type="evidence" value="ECO:0000318"/>
    <property type="project" value="GO_Central"/>
</dbReference>
<dbReference type="GO" id="GO:0002181">
    <property type="term" value="P:cytoplasmic translation"/>
    <property type="evidence" value="ECO:0000318"/>
    <property type="project" value="GO_Central"/>
</dbReference>
<dbReference type="CDD" id="cd05795">
    <property type="entry name" value="Ribosomal_P0_L10e"/>
    <property type="match status" value="1"/>
</dbReference>
<dbReference type="FunFam" id="3.90.105.20:FF:000001">
    <property type="entry name" value="60S acidic ribosomal protein P0"/>
    <property type="match status" value="1"/>
</dbReference>
<dbReference type="Gene3D" id="3.30.70.1730">
    <property type="match status" value="1"/>
</dbReference>
<dbReference type="Gene3D" id="3.90.105.20">
    <property type="match status" value="1"/>
</dbReference>
<dbReference type="Gene3D" id="6.10.140.760">
    <property type="match status" value="1"/>
</dbReference>
<dbReference type="HAMAP" id="MF_00280">
    <property type="entry name" value="Ribosomal_uL10_arch"/>
    <property type="match status" value="1"/>
</dbReference>
<dbReference type="InterPro" id="IPR050323">
    <property type="entry name" value="Ribosomal_protein_uL10"/>
</dbReference>
<dbReference type="InterPro" id="IPR001790">
    <property type="entry name" value="Ribosomal_uL10"/>
</dbReference>
<dbReference type="InterPro" id="IPR040637">
    <property type="entry name" value="Ribosomal_uL10-like_insert"/>
</dbReference>
<dbReference type="InterPro" id="IPR043164">
    <property type="entry name" value="Ribosomal_uL10-like_insert_sf"/>
</dbReference>
<dbReference type="InterPro" id="IPR043141">
    <property type="entry name" value="Ribosomal_uL10-like_sf"/>
</dbReference>
<dbReference type="InterPro" id="IPR022909">
    <property type="entry name" value="Ribosomal_uL10_arc"/>
</dbReference>
<dbReference type="NCBIfam" id="NF003095">
    <property type="entry name" value="PRK04019.1-1"/>
    <property type="match status" value="1"/>
</dbReference>
<dbReference type="PANTHER" id="PTHR45699">
    <property type="entry name" value="60S ACIDIC RIBOSOMAL PROTEIN P0"/>
    <property type="match status" value="1"/>
</dbReference>
<dbReference type="PANTHER" id="PTHR45699:SF3">
    <property type="entry name" value="LARGE RIBOSOMAL SUBUNIT PROTEIN UL10"/>
    <property type="match status" value="1"/>
</dbReference>
<dbReference type="Pfam" id="PF00466">
    <property type="entry name" value="Ribosomal_L10"/>
    <property type="match status" value="1"/>
</dbReference>
<dbReference type="Pfam" id="PF17777">
    <property type="entry name" value="RL10P_insert"/>
    <property type="match status" value="1"/>
</dbReference>
<dbReference type="SUPFAM" id="SSF160369">
    <property type="entry name" value="Ribosomal protein L10-like"/>
    <property type="match status" value="1"/>
</dbReference>
<keyword id="KW-1185">Reference proteome</keyword>
<keyword id="KW-0687">Ribonucleoprotein</keyword>
<keyword id="KW-0689">Ribosomal protein</keyword>
<keyword id="KW-0694">RNA-binding</keyword>
<keyword id="KW-0699">rRNA-binding</keyword>
<comment type="function">
    <text evidence="1">Forms part of the ribosomal stalk, playing a central role in the interaction of the ribosome with GTP-bound translation factors.</text>
</comment>
<comment type="subunit">
    <text evidence="1">Part of the 50S ribosomal subunit. Forms part of the ribosomal stalk which helps the ribosome interact with GTP-bound translation factors. Forms a heptameric L10(L12)2(L12)2(L12)2 complex, where L10 forms an elongated spine to which the L12 dimers bind in a sequential fashion.</text>
</comment>
<comment type="miscellaneous">
    <text>Was called L10e in this organism; in this case 'e' is for E.coli-like, not eukaryotic-type protein.</text>
</comment>
<comment type="similarity">
    <text evidence="1">Belongs to the universal ribosomal protein uL10 family.</text>
</comment>
<comment type="sequence caution" evidence="3">
    <conflict type="erroneous initiation">
        <sequence resource="EMBL-CDS" id="AAB99526"/>
    </conflict>
    <text>Truncated N-terminus.</text>
</comment>
<evidence type="ECO:0000255" key="1">
    <source>
        <dbReference type="HAMAP-Rule" id="MF_00280"/>
    </source>
</evidence>
<evidence type="ECO:0000256" key="2">
    <source>
        <dbReference type="SAM" id="MobiDB-lite"/>
    </source>
</evidence>
<evidence type="ECO:0000305" key="3"/>
<reference key="1">
    <citation type="journal article" date="1997" name="Biochim. Biophys. Acta">
        <title>Nucleotide sequence of a gene cluster encoding NusG and the L11-L1-L10-L12 ribosomal proteins from the thermophilic archaeon Sulfolobus solfataricus.</title>
        <authorList>
            <person name="Geiger M."/>
            <person name="Groebner P."/>
            <person name="Piendl W."/>
        </authorList>
    </citation>
    <scope>NUCLEOTIDE SEQUENCE [GENOMIC DNA]</scope>
</reference>
<reference key="2">
    <citation type="journal article" date="2001" name="Proc. Natl. Acad. Sci. U.S.A.">
        <title>The complete genome of the crenarchaeon Sulfolobus solfataricus P2.</title>
        <authorList>
            <person name="She Q."/>
            <person name="Singh R.K."/>
            <person name="Confalonieri F."/>
            <person name="Zivanovic Y."/>
            <person name="Allard G."/>
            <person name="Awayez M.J."/>
            <person name="Chan-Weiher C.C.-Y."/>
            <person name="Clausen I.G."/>
            <person name="Curtis B.A."/>
            <person name="De Moors A."/>
            <person name="Erauso G."/>
            <person name="Fletcher C."/>
            <person name="Gordon P.M.K."/>
            <person name="Heikamp-de Jong I."/>
            <person name="Jeffries A.C."/>
            <person name="Kozera C.J."/>
            <person name="Medina N."/>
            <person name="Peng X."/>
            <person name="Thi-Ngoc H.P."/>
            <person name="Redder P."/>
            <person name="Schenk M.E."/>
            <person name="Theriault C."/>
            <person name="Tolstrup N."/>
            <person name="Charlebois R.L."/>
            <person name="Doolittle W.F."/>
            <person name="Duguet M."/>
            <person name="Gaasterland T."/>
            <person name="Garrett R.A."/>
            <person name="Ragan M.A."/>
            <person name="Sensen C.W."/>
            <person name="Van der Oost J."/>
        </authorList>
    </citation>
    <scope>NUCLEOTIDE SEQUENCE [LARGE SCALE GENOMIC DNA]</scope>
    <source>
        <strain>ATCC 35092 / DSM 1617 / JCM 11322 / P2</strain>
    </source>
</reference>
<organism>
    <name type="scientific">Saccharolobus solfataricus (strain ATCC 35092 / DSM 1617 / JCM 11322 / P2)</name>
    <name type="common">Sulfolobus solfataricus</name>
    <dbReference type="NCBI Taxonomy" id="273057"/>
    <lineage>
        <taxon>Archaea</taxon>
        <taxon>Thermoproteota</taxon>
        <taxon>Thermoprotei</taxon>
        <taxon>Sulfolobales</taxon>
        <taxon>Sulfolobaceae</taxon>
        <taxon>Saccharolobus</taxon>
    </lineage>
</organism>
<sequence>MKRLALALKQRKVASWKLEEVKELTELIKNSNTILIGNLEGFPADKLHEIRKKLRGKATIKVTKNTLFKIAAKNAGIDIEKLEQYLTGPNVFIFTKDNPFITNMFFENYKLRRYAMPGDKAEEEVVIPAGDTGMPAGPILSVFGKLKVQTKVQDGKVHVVKDTVVAKPGDVIPAEALPILQKLGIMPVYVKLKIKVAYHEGLVIPAESLKLDLEGYRSNITEAYRNAFTLAVEIAYPTPDVLKFTISKVFKNAIALASEIGYITPESAQAVISKAVAKAYALATAIGGKVDLGVQLPTVQQSQSQQPAAEEKKEEKKEEEKKGPSEEEIASGLASLFG</sequence>
<name>RL10_SACS2</name>
<protein>
    <recommendedName>
        <fullName evidence="1">Large ribosomal subunit protein uL10</fullName>
    </recommendedName>
    <alternativeName>
        <fullName evidence="3">50S ribosomal protein L10</fullName>
    </alternativeName>
    <alternativeName>
        <fullName evidence="1">Acidic ribosomal protein P0 homolog</fullName>
    </alternativeName>
    <alternativeName>
        <fullName>L10e</fullName>
    </alternativeName>
</protein>
<accession>P96039</accession>
<feature type="chain" id="PRO_0000154807" description="Large ribosomal subunit protein uL10">
    <location>
        <begin position="1"/>
        <end position="338"/>
    </location>
</feature>
<feature type="region of interest" description="Disordered" evidence="2">
    <location>
        <begin position="298"/>
        <end position="338"/>
    </location>
</feature>
<feature type="compositionally biased region" description="Basic and acidic residues" evidence="2">
    <location>
        <begin position="309"/>
        <end position="325"/>
    </location>
</feature>
<gene>
    <name evidence="1" type="primary">rpl10</name>
    <name evidence="1" type="synonym">rplP0</name>
    <name type="ordered locus">SSO0344</name>
</gene>